<accession>B2KEA9</accession>
<proteinExistence type="inferred from homology"/>
<dbReference type="EC" id="3.6.1.66" evidence="1"/>
<dbReference type="EMBL" id="CP001055">
    <property type="protein sequence ID" value="ACC98855.1"/>
    <property type="molecule type" value="Genomic_DNA"/>
</dbReference>
<dbReference type="RefSeq" id="WP_012415470.1">
    <property type="nucleotide sequence ID" value="NC_010644.1"/>
</dbReference>
<dbReference type="SMR" id="B2KEA9"/>
<dbReference type="STRING" id="445932.Emin_1305"/>
<dbReference type="KEGG" id="emi:Emin_1305"/>
<dbReference type="HOGENOM" id="CLU_082080_0_2_0"/>
<dbReference type="OrthoDB" id="9807456at2"/>
<dbReference type="Proteomes" id="UP000001029">
    <property type="component" value="Chromosome"/>
</dbReference>
<dbReference type="GO" id="GO:0005829">
    <property type="term" value="C:cytosol"/>
    <property type="evidence" value="ECO:0007669"/>
    <property type="project" value="TreeGrafter"/>
</dbReference>
<dbReference type="GO" id="GO:0035870">
    <property type="term" value="F:dITP diphosphatase activity"/>
    <property type="evidence" value="ECO:0007669"/>
    <property type="project" value="RHEA"/>
</dbReference>
<dbReference type="GO" id="GO:0036220">
    <property type="term" value="F:ITP diphosphatase activity"/>
    <property type="evidence" value="ECO:0007669"/>
    <property type="project" value="UniProtKB-EC"/>
</dbReference>
<dbReference type="GO" id="GO:0046872">
    <property type="term" value="F:metal ion binding"/>
    <property type="evidence" value="ECO:0007669"/>
    <property type="project" value="UniProtKB-KW"/>
</dbReference>
<dbReference type="GO" id="GO:0000166">
    <property type="term" value="F:nucleotide binding"/>
    <property type="evidence" value="ECO:0007669"/>
    <property type="project" value="UniProtKB-KW"/>
</dbReference>
<dbReference type="GO" id="GO:0017111">
    <property type="term" value="F:ribonucleoside triphosphate phosphatase activity"/>
    <property type="evidence" value="ECO:0007669"/>
    <property type="project" value="InterPro"/>
</dbReference>
<dbReference type="GO" id="GO:0036222">
    <property type="term" value="F:XTP diphosphatase activity"/>
    <property type="evidence" value="ECO:0007669"/>
    <property type="project" value="RHEA"/>
</dbReference>
<dbReference type="GO" id="GO:0009117">
    <property type="term" value="P:nucleotide metabolic process"/>
    <property type="evidence" value="ECO:0007669"/>
    <property type="project" value="UniProtKB-KW"/>
</dbReference>
<dbReference type="GO" id="GO:0009146">
    <property type="term" value="P:purine nucleoside triphosphate catabolic process"/>
    <property type="evidence" value="ECO:0007669"/>
    <property type="project" value="UniProtKB-UniRule"/>
</dbReference>
<dbReference type="CDD" id="cd00515">
    <property type="entry name" value="HAM1"/>
    <property type="match status" value="1"/>
</dbReference>
<dbReference type="FunFam" id="3.90.950.10:FF:000001">
    <property type="entry name" value="dITP/XTP pyrophosphatase"/>
    <property type="match status" value="1"/>
</dbReference>
<dbReference type="Gene3D" id="3.90.950.10">
    <property type="match status" value="1"/>
</dbReference>
<dbReference type="HAMAP" id="MF_01405">
    <property type="entry name" value="Non_canon_purine_NTPase"/>
    <property type="match status" value="1"/>
</dbReference>
<dbReference type="InterPro" id="IPR020922">
    <property type="entry name" value="dITP/XTP_pyrophosphatase"/>
</dbReference>
<dbReference type="InterPro" id="IPR029001">
    <property type="entry name" value="ITPase-like_fam"/>
</dbReference>
<dbReference type="InterPro" id="IPR002637">
    <property type="entry name" value="RdgB/HAM1"/>
</dbReference>
<dbReference type="NCBIfam" id="TIGR00042">
    <property type="entry name" value="RdgB/HAM1 family non-canonical purine NTP pyrophosphatase"/>
    <property type="match status" value="1"/>
</dbReference>
<dbReference type="PANTHER" id="PTHR11067:SF9">
    <property type="entry name" value="INOSINE TRIPHOSPHATE PYROPHOSPHATASE"/>
    <property type="match status" value="1"/>
</dbReference>
<dbReference type="PANTHER" id="PTHR11067">
    <property type="entry name" value="INOSINE TRIPHOSPHATE PYROPHOSPHATASE/HAM1 PROTEIN"/>
    <property type="match status" value="1"/>
</dbReference>
<dbReference type="Pfam" id="PF01725">
    <property type="entry name" value="Ham1p_like"/>
    <property type="match status" value="1"/>
</dbReference>
<dbReference type="SUPFAM" id="SSF52972">
    <property type="entry name" value="ITPase-like"/>
    <property type="match status" value="1"/>
</dbReference>
<name>IXTPA_ELUMP</name>
<protein>
    <recommendedName>
        <fullName evidence="1">dITP/XTP pyrophosphatase</fullName>
        <ecNumber evidence="1">3.6.1.66</ecNumber>
    </recommendedName>
    <alternativeName>
        <fullName evidence="1">Non-canonical purine NTP pyrophosphatase</fullName>
    </alternativeName>
    <alternativeName>
        <fullName evidence="1">Non-standard purine NTP pyrophosphatase</fullName>
    </alternativeName>
    <alternativeName>
        <fullName evidence="1">Nucleoside-triphosphate diphosphatase</fullName>
    </alternativeName>
    <alternativeName>
        <fullName evidence="1">Nucleoside-triphosphate pyrophosphatase</fullName>
        <shortName evidence="1">NTPase</shortName>
    </alternativeName>
</protein>
<feature type="chain" id="PRO_1000145489" description="dITP/XTP pyrophosphatase">
    <location>
        <begin position="1"/>
        <end position="197"/>
    </location>
</feature>
<feature type="active site" description="Proton acceptor" evidence="1">
    <location>
        <position position="73"/>
    </location>
</feature>
<feature type="binding site" evidence="1">
    <location>
        <begin position="7"/>
        <end position="12"/>
    </location>
    <ligand>
        <name>substrate</name>
    </ligand>
</feature>
<feature type="binding site" evidence="1">
    <location>
        <position position="44"/>
    </location>
    <ligand>
        <name>Mg(2+)</name>
        <dbReference type="ChEBI" id="CHEBI:18420"/>
    </ligand>
</feature>
<feature type="binding site" evidence="1">
    <location>
        <position position="73"/>
    </location>
    <ligand>
        <name>Mg(2+)</name>
        <dbReference type="ChEBI" id="CHEBI:18420"/>
    </ligand>
</feature>
<feature type="binding site" evidence="1">
    <location>
        <position position="74"/>
    </location>
    <ligand>
        <name>substrate</name>
    </ligand>
</feature>
<feature type="binding site" evidence="1">
    <location>
        <begin position="156"/>
        <end position="159"/>
    </location>
    <ligand>
        <name>substrate</name>
    </ligand>
</feature>
<feature type="binding site" evidence="1">
    <location>
        <position position="179"/>
    </location>
    <ligand>
        <name>substrate</name>
    </ligand>
</feature>
<feature type="binding site" evidence="1">
    <location>
        <begin position="184"/>
        <end position="185"/>
    </location>
    <ligand>
        <name>substrate</name>
    </ligand>
</feature>
<keyword id="KW-0378">Hydrolase</keyword>
<keyword id="KW-0460">Magnesium</keyword>
<keyword id="KW-0479">Metal-binding</keyword>
<keyword id="KW-0546">Nucleotide metabolism</keyword>
<keyword id="KW-0547">Nucleotide-binding</keyword>
<keyword id="KW-1185">Reference proteome</keyword>
<organism>
    <name type="scientific">Elusimicrobium minutum (strain Pei191)</name>
    <dbReference type="NCBI Taxonomy" id="445932"/>
    <lineage>
        <taxon>Bacteria</taxon>
        <taxon>Pseudomonadati</taxon>
        <taxon>Elusimicrobiota</taxon>
        <taxon>Elusimicrobia</taxon>
        <taxon>Elusimicrobiales</taxon>
        <taxon>Elusimicrobiaceae</taxon>
        <taxon>Elusimicrobium</taxon>
    </lineage>
</organism>
<sequence length="197" mass="21651">MKILLATGNEQKAKELKCILPKNIGNKEIEYLTLGDFPDLRMPEETGKTLEENAILKAREAARQAGIAALADDTGLEVDALNGEPGVRSARYAGEYCDPDENNRKLLDSLDGLFLGQRTARFKTVACLATPEGEYELAEGVLGGLIGFGYRGENGFGYDPLFIVKGKSKTLAELTLDEKNKISHRRKAFEKISKKIK</sequence>
<evidence type="ECO:0000255" key="1">
    <source>
        <dbReference type="HAMAP-Rule" id="MF_01405"/>
    </source>
</evidence>
<gene>
    <name type="ordered locus">Emin_1305</name>
</gene>
<comment type="function">
    <text evidence="1">Pyrophosphatase that catalyzes the hydrolysis of nucleoside triphosphates to their monophosphate derivatives, with a high preference for the non-canonical purine nucleotides XTP (xanthosine triphosphate), dITP (deoxyinosine triphosphate) and ITP. Seems to function as a house-cleaning enzyme that removes non-canonical purine nucleotides from the nucleotide pool, thus preventing their incorporation into DNA/RNA and avoiding chromosomal lesions.</text>
</comment>
<comment type="catalytic activity">
    <reaction evidence="1">
        <text>XTP + H2O = XMP + diphosphate + H(+)</text>
        <dbReference type="Rhea" id="RHEA:28610"/>
        <dbReference type="ChEBI" id="CHEBI:15377"/>
        <dbReference type="ChEBI" id="CHEBI:15378"/>
        <dbReference type="ChEBI" id="CHEBI:33019"/>
        <dbReference type="ChEBI" id="CHEBI:57464"/>
        <dbReference type="ChEBI" id="CHEBI:61314"/>
        <dbReference type="EC" id="3.6.1.66"/>
    </reaction>
</comment>
<comment type="catalytic activity">
    <reaction evidence="1">
        <text>dITP + H2O = dIMP + diphosphate + H(+)</text>
        <dbReference type="Rhea" id="RHEA:28342"/>
        <dbReference type="ChEBI" id="CHEBI:15377"/>
        <dbReference type="ChEBI" id="CHEBI:15378"/>
        <dbReference type="ChEBI" id="CHEBI:33019"/>
        <dbReference type="ChEBI" id="CHEBI:61194"/>
        <dbReference type="ChEBI" id="CHEBI:61382"/>
        <dbReference type="EC" id="3.6.1.66"/>
    </reaction>
</comment>
<comment type="catalytic activity">
    <reaction evidence="1">
        <text>ITP + H2O = IMP + diphosphate + H(+)</text>
        <dbReference type="Rhea" id="RHEA:29399"/>
        <dbReference type="ChEBI" id="CHEBI:15377"/>
        <dbReference type="ChEBI" id="CHEBI:15378"/>
        <dbReference type="ChEBI" id="CHEBI:33019"/>
        <dbReference type="ChEBI" id="CHEBI:58053"/>
        <dbReference type="ChEBI" id="CHEBI:61402"/>
        <dbReference type="EC" id="3.6.1.66"/>
    </reaction>
</comment>
<comment type="cofactor">
    <cofactor evidence="1">
        <name>Mg(2+)</name>
        <dbReference type="ChEBI" id="CHEBI:18420"/>
    </cofactor>
    <text evidence="1">Binds 1 Mg(2+) ion per subunit.</text>
</comment>
<comment type="subunit">
    <text evidence="1">Homodimer.</text>
</comment>
<comment type="similarity">
    <text evidence="1">Belongs to the HAM1 NTPase family.</text>
</comment>
<reference key="1">
    <citation type="journal article" date="2009" name="Appl. Environ. Microbiol.">
        <title>Genomic analysis of 'Elusimicrobium minutum,' the first cultivated representative of the phylum 'Elusimicrobia' (formerly termite group 1).</title>
        <authorList>
            <person name="Herlemann D.P.R."/>
            <person name="Geissinger O."/>
            <person name="Ikeda-Ohtsubo W."/>
            <person name="Kunin V."/>
            <person name="Sun H."/>
            <person name="Lapidus A."/>
            <person name="Hugenholtz P."/>
            <person name="Brune A."/>
        </authorList>
    </citation>
    <scope>NUCLEOTIDE SEQUENCE [LARGE SCALE GENOMIC DNA]</scope>
    <source>
        <strain>Pei191</strain>
    </source>
</reference>